<protein>
    <recommendedName>
        <fullName>Extracellular exo-inulinase inuE</fullName>
        <ecNumber>3.2.1.80</ecNumber>
    </recommendedName>
</protein>
<keyword id="KW-0119">Carbohydrate metabolism</keyword>
<keyword id="KW-0325">Glycoprotein</keyword>
<keyword id="KW-0326">Glycosidase</keyword>
<keyword id="KW-0378">Hydrolase</keyword>
<keyword id="KW-0624">Polysaccharide degradation</keyword>
<keyword id="KW-0964">Secreted</keyword>
<keyword id="KW-0732">Signal</keyword>
<sequence>MRAFLALIFLTFVMNVESSRPLMAFTPSHGWMNDPNGQFYDSKNELWHLYYQYNPNDTVWGTPLYWGHATSKDLSTWKDYGATIGPDRDEDGIFSGNIVVDHNNTSGFFNDSIDPRQRVVAIYTYNTEGSQTQHVAYSLDGGYTFEKYEHNPVLDVDNINFRDPKVFWHEPTNQWIMVIALSQQFKIQIYGSIDLTNWSLHSNFTGGLFGFQYECPGLIEVPAEGTDESKWVMFIAINPGSPLGGSSNQYFIGSFDGFEFVPDDSQARLMDYGKDFYAFQTFDNAPKESGVVGLAWASNWQYANLAPTKEWRSSMTLARQMTLASRNMNPETKVLSLLQKPIFGESVVAANKISKRNITGQDEQAVKIHKNSTGTFSFDITFSVDSSKNQTGQLQVISGQNGESIRAGFDPTAGQFFVDRGNTSGLKENPFLTDKTSAYVEPWKHQNDLPVYKMFGVIDGNLIEVFLNDGIATLTNTFFIPGTEGLEYLEIESSSDAIHIVESEVKELKLRATS</sequence>
<evidence type="ECO:0000250" key="1"/>
<evidence type="ECO:0000255" key="2"/>
<evidence type="ECO:0000269" key="3">
    <source ref="1"/>
</evidence>
<evidence type="ECO:0000305" key="4"/>
<feature type="signal peptide" evidence="2">
    <location>
        <begin position="1"/>
        <end position="18"/>
    </location>
</feature>
<feature type="chain" id="PRO_0000429669" description="Extracellular exo-inulinase inuE">
    <location>
        <begin position="19"/>
        <end position="514"/>
    </location>
</feature>
<feature type="active site" description="Nucleophile" evidence="1">
    <location>
        <position position="34"/>
    </location>
</feature>
<feature type="active site" description="Proton donor/acceptor" evidence="1">
    <location>
        <position position="214"/>
    </location>
</feature>
<feature type="binding site" evidence="1">
    <location>
        <begin position="33"/>
        <end position="34"/>
    </location>
    <ligand>
        <name>substrate</name>
    </ligand>
</feature>
<feature type="binding site" evidence="1">
    <location>
        <position position="52"/>
    </location>
    <ligand>
        <name>substrate</name>
    </ligand>
</feature>
<feature type="binding site" evidence="1">
    <location>
        <position position="60"/>
    </location>
    <ligand>
        <name>substrate</name>
    </ligand>
</feature>
<feature type="binding site" evidence="1">
    <location>
        <position position="95"/>
    </location>
    <ligand>
        <name>substrate</name>
    </ligand>
</feature>
<feature type="binding site" evidence="1">
    <location>
        <begin position="162"/>
        <end position="163"/>
    </location>
    <ligand>
        <name>substrate</name>
    </ligand>
</feature>
<feature type="binding site" evidence="1">
    <location>
        <position position="214"/>
    </location>
    <ligand>
        <name>substrate</name>
    </ligand>
</feature>
<feature type="binding site" evidence="1">
    <location>
        <position position="300"/>
    </location>
    <ligand>
        <name>substrate</name>
    </ligand>
</feature>
<feature type="glycosylation site" description="N-linked (GlcNAc...) asparagine" evidence="2">
    <location>
        <position position="56"/>
    </location>
</feature>
<feature type="glycosylation site" description="N-linked (GlcNAc...) asparagine" evidence="2">
    <location>
        <position position="104"/>
    </location>
</feature>
<feature type="glycosylation site" description="N-linked (GlcNAc...) asparagine" evidence="2">
    <location>
        <position position="110"/>
    </location>
</feature>
<feature type="glycosylation site" description="N-linked (GlcNAc...) asparagine" evidence="2">
    <location>
        <position position="197"/>
    </location>
</feature>
<feature type="glycosylation site" description="N-linked (GlcNAc...) asparagine" evidence="2">
    <location>
        <position position="203"/>
    </location>
</feature>
<feature type="glycosylation site" description="N-linked (GlcNAc...) asparagine" evidence="2">
    <location>
        <position position="357"/>
    </location>
</feature>
<feature type="glycosylation site" description="N-linked (GlcNAc...) asparagine" evidence="2">
    <location>
        <position position="371"/>
    </location>
</feature>
<feature type="glycosylation site" description="N-linked (GlcNAc...) asparagine" evidence="2">
    <location>
        <position position="389"/>
    </location>
</feature>
<feature type="glycosylation site" description="N-linked (GlcNAc...) asparagine" evidence="2">
    <location>
        <position position="422"/>
    </location>
</feature>
<feature type="sequence variant" description="In strain: 1." evidence="3">
    <original>A</original>
    <variation>V</variation>
    <location>
        <position position="223"/>
    </location>
</feature>
<feature type="sequence variant" description="In strain: 1." evidence="3">
    <original>L</original>
    <variation>F</variation>
    <location>
        <position position="432"/>
    </location>
</feature>
<dbReference type="EC" id="3.2.1.80"/>
<dbReference type="EMBL" id="EU195800">
    <property type="protein sequence ID" value="ABW75766.2"/>
    <property type="molecule type" value="Genomic_DNA"/>
</dbReference>
<dbReference type="EMBL" id="EU195799">
    <property type="protein sequence ID" value="ABW70125.2"/>
    <property type="molecule type" value="Genomic_DNA"/>
</dbReference>
<dbReference type="SMR" id="A8W7I5"/>
<dbReference type="CAZy" id="GH32">
    <property type="family name" value="Glycoside Hydrolase Family 32"/>
</dbReference>
<dbReference type="VEuPathDB" id="FungiDB:PGUG_02777"/>
<dbReference type="GO" id="GO:0005576">
    <property type="term" value="C:extracellular region"/>
    <property type="evidence" value="ECO:0007669"/>
    <property type="project" value="UniProtKB-SubCell"/>
</dbReference>
<dbReference type="GO" id="GO:0000324">
    <property type="term" value="C:fungal-type vacuole"/>
    <property type="evidence" value="ECO:0007669"/>
    <property type="project" value="TreeGrafter"/>
</dbReference>
<dbReference type="GO" id="GO:0051669">
    <property type="term" value="F:fructan beta-fructosidase activity"/>
    <property type="evidence" value="ECO:0007669"/>
    <property type="project" value="UniProtKB-EC"/>
</dbReference>
<dbReference type="GO" id="GO:0004575">
    <property type="term" value="F:sucrose alpha-glucosidase activity"/>
    <property type="evidence" value="ECO:0007669"/>
    <property type="project" value="TreeGrafter"/>
</dbReference>
<dbReference type="GO" id="GO:0000272">
    <property type="term" value="P:polysaccharide catabolic process"/>
    <property type="evidence" value="ECO:0007669"/>
    <property type="project" value="UniProtKB-KW"/>
</dbReference>
<dbReference type="GO" id="GO:0005987">
    <property type="term" value="P:sucrose catabolic process"/>
    <property type="evidence" value="ECO:0007669"/>
    <property type="project" value="TreeGrafter"/>
</dbReference>
<dbReference type="CDD" id="cd18622">
    <property type="entry name" value="GH32_Inu-like"/>
    <property type="match status" value="1"/>
</dbReference>
<dbReference type="FunFam" id="2.115.10.20:FF:000002">
    <property type="entry name" value="Invertase 2"/>
    <property type="match status" value="1"/>
</dbReference>
<dbReference type="Gene3D" id="2.60.120.560">
    <property type="entry name" value="Exo-inulinase, domain 1"/>
    <property type="match status" value="1"/>
</dbReference>
<dbReference type="Gene3D" id="2.115.10.20">
    <property type="entry name" value="Glycosyl hydrolase domain, family 43"/>
    <property type="match status" value="1"/>
</dbReference>
<dbReference type="InterPro" id="IPR013320">
    <property type="entry name" value="ConA-like_dom_sf"/>
</dbReference>
<dbReference type="InterPro" id="IPR001362">
    <property type="entry name" value="Glyco_hydro_32"/>
</dbReference>
<dbReference type="InterPro" id="IPR013189">
    <property type="entry name" value="Glyco_hydro_32_C"/>
</dbReference>
<dbReference type="InterPro" id="IPR013148">
    <property type="entry name" value="Glyco_hydro_32_N"/>
</dbReference>
<dbReference type="InterPro" id="IPR023296">
    <property type="entry name" value="Glyco_hydro_beta-prop_sf"/>
</dbReference>
<dbReference type="PANTHER" id="PTHR42800">
    <property type="entry name" value="EXOINULINASE INUD (AFU_ORTHOLOGUE AFUA_5G00480)"/>
    <property type="match status" value="1"/>
</dbReference>
<dbReference type="PANTHER" id="PTHR42800:SF4">
    <property type="entry name" value="INVERTASE 2"/>
    <property type="match status" value="1"/>
</dbReference>
<dbReference type="Pfam" id="PF08244">
    <property type="entry name" value="Glyco_hydro_32C"/>
    <property type="match status" value="1"/>
</dbReference>
<dbReference type="Pfam" id="PF00251">
    <property type="entry name" value="Glyco_hydro_32N"/>
    <property type="match status" value="1"/>
</dbReference>
<dbReference type="SMART" id="SM00640">
    <property type="entry name" value="Glyco_32"/>
    <property type="match status" value="1"/>
</dbReference>
<dbReference type="SUPFAM" id="SSF75005">
    <property type="entry name" value="Arabinanase/levansucrase/invertase"/>
    <property type="match status" value="1"/>
</dbReference>
<dbReference type="SUPFAM" id="SSF49899">
    <property type="entry name" value="Concanavalin A-like lectins/glucanases"/>
    <property type="match status" value="1"/>
</dbReference>
<comment type="function">
    <text evidence="3">Exo-inulinase involved in utilization of the plant storage polymer inulin, consisting of fructooligosaccharides with a degree of polymerization (DP) value from 2 to 60. Splits off terminal fructose units successively from the non-reducing end of the inulin molecule.</text>
</comment>
<comment type="catalytic activity">
    <reaction evidence="3">
        <text>Hydrolysis of terminal, non-reducing (2-&gt;1)- and (2-&gt;6)-linked beta-D-fructofuranose residues in fructans.</text>
        <dbReference type="EC" id="3.2.1.80"/>
    </reaction>
</comment>
<comment type="subcellular location">
    <subcellularLocation>
        <location evidence="3">Secreted</location>
    </subcellularLocation>
</comment>
<comment type="similarity">
    <text evidence="4">Belongs to the glycosyl hydrolase 32 family.</text>
</comment>
<organism>
    <name type="scientific">Meyerozyma guilliermondii</name>
    <name type="common">Yeast</name>
    <name type="synonym">Candida guilliermondii</name>
    <dbReference type="NCBI Taxonomy" id="4929"/>
    <lineage>
        <taxon>Eukaryota</taxon>
        <taxon>Fungi</taxon>
        <taxon>Dikarya</taxon>
        <taxon>Ascomycota</taxon>
        <taxon>Saccharomycotina</taxon>
        <taxon>Pichiomycetes</taxon>
        <taxon>Debaryomycetaceae</taxon>
        <taxon>Meyerozyma</taxon>
    </lineage>
</organism>
<accession>A8W7I5</accession>
<accession>A8W7I4</accession>
<proteinExistence type="evidence at protein level"/>
<name>INUE_PICGM</name>
<reference key="1">
    <citation type="journal article" date="2009" name="Biochem. Eng. J.">
        <title>Inulinase overproduction by a mutant of the marine yeast Pichia guilliermondii using surface response methodology and inulin hydrolysis.</title>
        <authorList>
            <person name="Yu X."/>
            <person name="Guo N."/>
            <person name="Chi Z."/>
            <person name="Gong F."/>
            <person name="Sheng J."/>
            <person name="Chi Z."/>
        </authorList>
    </citation>
    <scope>NUCLEOTIDE SEQUENCE [GENOMIC DNA]</scope>
    <scope>VARIANTS VAL-223 AND PHE-432</scope>
    <scope>SUBCELLULAR LOCATION</scope>
    <scope>FUNCTION</scope>
    <scope>CATALYTIC ACTIVITY</scope>
    <source>
        <strain>1</strain>
        <strain>M-30</strain>
    </source>
</reference>